<name>FAEB_ASPNC</name>
<proteinExistence type="inferred from homology"/>
<sequence length="521" mass="57208">MKVSSLLSVALPGAALAATDSFQSRCNEFQNKIDIANVTVRSVAYVAAGQNISQAEVASVCKASVQASVDLCRVTMNISTSDRSHLWAEAWLPRNYTGRFVSTGNGGLAGCVQETDLNFAANFGFATVGTNGGHDGDTAKYFLNNSEVLADFAYRSVHEGTVVGKQLTQLFYDEGYNYSYYLGCSTGGRQGYQQVQRFPDDYDGVIAGSAAMNFINLISWGAFLWKATGLADDPDFISADLWSVIHQEIVRQCDLVDGALDGIIEDPDFCAPVIERLICDGTTNGTSCITGAQAAKVNRALSDFYGPDGTVYYPRLNYGGEADSAYLYFTGSMYSRTEEWYKYVVYNDTNWNSSQWTLESAKLALEQNPFNIQAFDPNITAFRDRGGKLLSYHGTQDPIISSTDSKLYYRRVANALNAAPSELDEFYRFFQISGMGHCGDGTGASYIGQGYGTYTSKAPQVNLLRTMVDWVENGKAPEYMPGNKLNANGSIEYMRKHCRYPKHNVHTGPGNYTDPNSWTCV</sequence>
<keyword id="KW-0106">Calcium</keyword>
<keyword id="KW-0119">Carbohydrate metabolism</keyword>
<keyword id="KW-1015">Disulfide bond</keyword>
<keyword id="KW-0325">Glycoprotein</keyword>
<keyword id="KW-0378">Hydrolase</keyword>
<keyword id="KW-0479">Metal-binding</keyword>
<keyword id="KW-0624">Polysaccharide degradation</keyword>
<keyword id="KW-1185">Reference proteome</keyword>
<keyword id="KW-0964">Secreted</keyword>
<keyword id="KW-0719">Serine esterase</keyword>
<keyword id="KW-0732">Signal</keyword>
<keyword id="KW-0858">Xylan degradation</keyword>
<reference key="1">
    <citation type="journal article" date="2007" name="Nat. Biotechnol.">
        <title>Genome sequencing and analysis of the versatile cell factory Aspergillus niger CBS 513.88.</title>
        <authorList>
            <person name="Pel H.J."/>
            <person name="de Winde J.H."/>
            <person name="Archer D.B."/>
            <person name="Dyer P.S."/>
            <person name="Hofmann G."/>
            <person name="Schaap P.J."/>
            <person name="Turner G."/>
            <person name="de Vries R.P."/>
            <person name="Albang R."/>
            <person name="Albermann K."/>
            <person name="Andersen M.R."/>
            <person name="Bendtsen J.D."/>
            <person name="Benen J.A.E."/>
            <person name="van den Berg M."/>
            <person name="Breestraat S."/>
            <person name="Caddick M.X."/>
            <person name="Contreras R."/>
            <person name="Cornell M."/>
            <person name="Coutinho P.M."/>
            <person name="Danchin E.G.J."/>
            <person name="Debets A.J.M."/>
            <person name="Dekker P."/>
            <person name="van Dijck P.W.M."/>
            <person name="van Dijk A."/>
            <person name="Dijkhuizen L."/>
            <person name="Driessen A.J.M."/>
            <person name="d'Enfert C."/>
            <person name="Geysens S."/>
            <person name="Goosen C."/>
            <person name="Groot G.S.P."/>
            <person name="de Groot P.W.J."/>
            <person name="Guillemette T."/>
            <person name="Henrissat B."/>
            <person name="Herweijer M."/>
            <person name="van den Hombergh J.P.T.W."/>
            <person name="van den Hondel C.A.M.J.J."/>
            <person name="van der Heijden R.T.J.M."/>
            <person name="van der Kaaij R.M."/>
            <person name="Klis F.M."/>
            <person name="Kools H.J."/>
            <person name="Kubicek C.P."/>
            <person name="van Kuyk P.A."/>
            <person name="Lauber J."/>
            <person name="Lu X."/>
            <person name="van der Maarel M.J.E.C."/>
            <person name="Meulenberg R."/>
            <person name="Menke H."/>
            <person name="Mortimer M.A."/>
            <person name="Nielsen J."/>
            <person name="Oliver S.G."/>
            <person name="Olsthoorn M."/>
            <person name="Pal K."/>
            <person name="van Peij N.N.M.E."/>
            <person name="Ram A.F.J."/>
            <person name="Rinas U."/>
            <person name="Roubos J.A."/>
            <person name="Sagt C.M.J."/>
            <person name="Schmoll M."/>
            <person name="Sun J."/>
            <person name="Ussery D."/>
            <person name="Varga J."/>
            <person name="Vervecken W."/>
            <person name="van de Vondervoort P.J.J."/>
            <person name="Wedler H."/>
            <person name="Woesten H.A.B."/>
            <person name="Zeng A.-P."/>
            <person name="van Ooyen A.J.J."/>
            <person name="Visser J."/>
            <person name="Stam H."/>
        </authorList>
    </citation>
    <scope>NUCLEOTIDE SEQUENCE [LARGE SCALE GENOMIC DNA]</scope>
    <source>
        <strain>ATCC MYA-4892 / CBS 513.88 / FGSC A1513</strain>
    </source>
</reference>
<protein>
    <recommendedName>
        <fullName>Probable feruloyl esterase B</fullName>
        <ecNumber evidence="3">3.1.1.73</ecNumber>
    </recommendedName>
    <alternativeName>
        <fullName>Ferulic acid esterase B</fullName>
        <shortName>FAEB</shortName>
    </alternativeName>
</protein>
<evidence type="ECO:0000250" key="1"/>
<evidence type="ECO:0000250" key="2">
    <source>
        <dbReference type="UniProtKB" id="Q2UP89"/>
    </source>
</evidence>
<evidence type="ECO:0000250" key="3">
    <source>
        <dbReference type="UniProtKB" id="Q8WZI8"/>
    </source>
</evidence>
<evidence type="ECO:0000255" key="4"/>
<evidence type="ECO:0000305" key="5"/>
<comment type="function">
    <text evidence="3">Involved in degradation of plant cell walls. Hydrolyzes the feruloyl-arabinose ester bond in arabinoxylans as well as the feruloyl-galactose and feruloyl-arabinose ester bonds in pectin.</text>
</comment>
<comment type="catalytic activity">
    <reaction evidence="3">
        <text>feruloyl-polysaccharide + H2O = ferulate + polysaccharide.</text>
        <dbReference type="EC" id="3.1.1.73"/>
    </reaction>
</comment>
<comment type="subcellular location">
    <subcellularLocation>
        <location evidence="1">Secreted</location>
    </subcellularLocation>
</comment>
<comment type="similarity">
    <text evidence="5">Belongs to the tannase family.</text>
</comment>
<gene>
    <name type="primary">faeB</name>
    <name type="ORF">An12g10390</name>
</gene>
<feature type="signal peptide" evidence="4">
    <location>
        <begin position="1"/>
        <end position="17"/>
    </location>
</feature>
<feature type="chain" id="PRO_5000220817" description="Probable feruloyl esterase B">
    <location>
        <begin position="18"/>
        <end position="521"/>
    </location>
</feature>
<feature type="active site" description="Acyl-ester intermediate" evidence="2">
    <location>
        <position position="185"/>
    </location>
</feature>
<feature type="active site" description="Charge relay system" evidence="2">
    <location>
        <position position="397"/>
    </location>
</feature>
<feature type="active site" description="Charge relay system" evidence="2">
    <location>
        <position position="437"/>
    </location>
</feature>
<feature type="binding site" evidence="2">
    <location>
        <position position="254"/>
    </location>
    <ligand>
        <name>Ca(2+)</name>
        <dbReference type="ChEBI" id="CHEBI:29108"/>
    </ligand>
</feature>
<feature type="binding site" evidence="2">
    <location>
        <position position="257"/>
    </location>
    <ligand>
        <name>Ca(2+)</name>
        <dbReference type="ChEBI" id="CHEBI:29108"/>
    </ligand>
</feature>
<feature type="binding site" evidence="2">
    <location>
        <position position="259"/>
    </location>
    <ligand>
        <name>Ca(2+)</name>
        <dbReference type="ChEBI" id="CHEBI:29108"/>
    </ligand>
</feature>
<feature type="binding site" evidence="2">
    <location>
        <position position="261"/>
    </location>
    <ligand>
        <name>Ca(2+)</name>
        <dbReference type="ChEBI" id="CHEBI:29108"/>
    </ligand>
</feature>
<feature type="binding site" evidence="2">
    <location>
        <position position="263"/>
    </location>
    <ligand>
        <name>Ca(2+)</name>
        <dbReference type="ChEBI" id="CHEBI:29108"/>
    </ligand>
</feature>
<feature type="glycosylation site" description="N-linked (GlcNAc...) asparagine" evidence="4">
    <location>
        <position position="37"/>
    </location>
</feature>
<feature type="glycosylation site" description="N-linked (GlcNAc...) asparagine" evidence="4">
    <location>
        <position position="51"/>
    </location>
</feature>
<feature type="glycosylation site" description="N-linked (GlcNAc...) asparagine" evidence="4">
    <location>
        <position position="77"/>
    </location>
</feature>
<feature type="glycosylation site" description="N-linked (GlcNAc...) asparagine" evidence="4">
    <location>
        <position position="95"/>
    </location>
</feature>
<feature type="glycosylation site" description="N-linked (GlcNAc...) asparagine" evidence="4">
    <location>
        <position position="144"/>
    </location>
</feature>
<feature type="glycosylation site" description="N-linked (GlcNAc...) asparagine" evidence="4">
    <location>
        <position position="177"/>
    </location>
</feature>
<feature type="glycosylation site" description="N-linked (GlcNAc...) asparagine" evidence="4">
    <location>
        <position position="284"/>
    </location>
</feature>
<feature type="glycosylation site" description="N-linked (GlcNAc...) asparagine" evidence="4">
    <location>
        <position position="347"/>
    </location>
</feature>
<feature type="glycosylation site" description="N-linked (GlcNAc...) asparagine" evidence="4">
    <location>
        <position position="352"/>
    </location>
</feature>
<feature type="glycosylation site" description="N-linked (GlcNAc...) asparagine" evidence="4">
    <location>
        <position position="378"/>
    </location>
</feature>
<feature type="glycosylation site" description="N-linked (GlcNAc...) asparagine" evidence="4">
    <location>
        <position position="488"/>
    </location>
</feature>
<feature type="glycosylation site" description="N-linked (GlcNAc...) asparagine" evidence="4">
    <location>
        <position position="511"/>
    </location>
</feature>
<feature type="disulfide bond" evidence="2">
    <location>
        <begin position="26"/>
        <end position="72"/>
    </location>
</feature>
<feature type="disulfide bond" evidence="2">
    <location>
        <begin position="61"/>
        <end position="111"/>
    </location>
</feature>
<feature type="disulfide bond" evidence="2">
    <location>
        <begin position="184"/>
        <end position="438"/>
    </location>
</feature>
<feature type="disulfide bond" evidence="2">
    <location>
        <begin position="253"/>
        <end position="270"/>
    </location>
</feature>
<feature type="disulfide bond" evidence="2">
    <location>
        <begin position="279"/>
        <end position="288"/>
    </location>
</feature>
<feature type="disulfide bond" evidence="2">
    <location>
        <begin position="498"/>
        <end position="520"/>
    </location>
</feature>
<organism>
    <name type="scientific">Aspergillus niger (strain ATCC MYA-4892 / CBS 513.88 / FGSC A1513)</name>
    <dbReference type="NCBI Taxonomy" id="425011"/>
    <lineage>
        <taxon>Eukaryota</taxon>
        <taxon>Fungi</taxon>
        <taxon>Dikarya</taxon>
        <taxon>Ascomycota</taxon>
        <taxon>Pezizomycotina</taxon>
        <taxon>Eurotiomycetes</taxon>
        <taxon>Eurotiomycetidae</taxon>
        <taxon>Eurotiales</taxon>
        <taxon>Aspergillaceae</taxon>
        <taxon>Aspergillus</taxon>
        <taxon>Aspergillus subgen. Circumdati</taxon>
    </lineage>
</organism>
<accession>A2R0Z6</accession>
<dbReference type="EC" id="3.1.1.73" evidence="3"/>
<dbReference type="EMBL" id="AM270291">
    <property type="protein sequence ID" value="CAK41386.1"/>
    <property type="molecule type" value="Genomic_DNA"/>
</dbReference>
<dbReference type="RefSeq" id="XP_001396085.1">
    <property type="nucleotide sequence ID" value="XM_001396048.2"/>
</dbReference>
<dbReference type="SMR" id="A2R0Z6"/>
<dbReference type="ESTHER" id="aspng-faeb">
    <property type="family name" value="Tannase"/>
</dbReference>
<dbReference type="GlyCosmos" id="A2R0Z6">
    <property type="glycosylation" value="12 sites, No reported glycans"/>
</dbReference>
<dbReference type="EnsemblFungi" id="CAK41386">
    <property type="protein sequence ID" value="CAK41386"/>
    <property type="gene ID" value="An12g10390"/>
</dbReference>
<dbReference type="GeneID" id="4986392"/>
<dbReference type="KEGG" id="ang:An12g10390"/>
<dbReference type="VEuPathDB" id="FungiDB:An12g10390"/>
<dbReference type="HOGENOM" id="CLU_014819_1_0_1"/>
<dbReference type="Proteomes" id="UP000006706">
    <property type="component" value="Chromosome 3L"/>
</dbReference>
<dbReference type="GO" id="GO:0005576">
    <property type="term" value="C:extracellular region"/>
    <property type="evidence" value="ECO:0007669"/>
    <property type="project" value="UniProtKB-SubCell"/>
</dbReference>
<dbReference type="GO" id="GO:0030600">
    <property type="term" value="F:feruloyl esterase activity"/>
    <property type="evidence" value="ECO:0000314"/>
    <property type="project" value="AspGD"/>
</dbReference>
<dbReference type="GO" id="GO:0046872">
    <property type="term" value="F:metal ion binding"/>
    <property type="evidence" value="ECO:0007669"/>
    <property type="project" value="UniProtKB-KW"/>
</dbReference>
<dbReference type="GO" id="GO:0042803">
    <property type="term" value="F:protein homodimerization activity"/>
    <property type="evidence" value="ECO:0000314"/>
    <property type="project" value="AspGD"/>
</dbReference>
<dbReference type="GO" id="GO:0000272">
    <property type="term" value="P:polysaccharide catabolic process"/>
    <property type="evidence" value="ECO:0000314"/>
    <property type="project" value="AspGD"/>
</dbReference>
<dbReference type="GO" id="GO:0045493">
    <property type="term" value="P:xylan catabolic process"/>
    <property type="evidence" value="ECO:0007669"/>
    <property type="project" value="UniProtKB-KW"/>
</dbReference>
<dbReference type="Gene3D" id="3.40.50.1820">
    <property type="entry name" value="alpha/beta hydrolase"/>
    <property type="match status" value="1"/>
</dbReference>
<dbReference type="InterPro" id="IPR029058">
    <property type="entry name" value="AB_hydrolase_fold"/>
</dbReference>
<dbReference type="InterPro" id="IPR011118">
    <property type="entry name" value="Tannase/feruloyl_esterase"/>
</dbReference>
<dbReference type="PANTHER" id="PTHR33938">
    <property type="entry name" value="FERULOYL ESTERASE B-RELATED"/>
    <property type="match status" value="1"/>
</dbReference>
<dbReference type="PANTHER" id="PTHR33938:SF15">
    <property type="entry name" value="FERULOYL ESTERASE B-RELATED"/>
    <property type="match status" value="1"/>
</dbReference>
<dbReference type="Pfam" id="PF07519">
    <property type="entry name" value="Tannase"/>
    <property type="match status" value="1"/>
</dbReference>
<dbReference type="SUPFAM" id="SSF53474">
    <property type="entry name" value="alpha/beta-Hydrolases"/>
    <property type="match status" value="1"/>
</dbReference>